<name>RPOA_RUBXD</name>
<proteinExistence type="inferred from homology"/>
<sequence>MMLDVAPPRFRVEEEDERHGIFVAEPLPRGLGHTLGNALRRVMLSGLPGAAVTKLRIEGVQHEFSTIEGVREDVVDIILNVKQLKFRLERDEPIELQISKDGPGEVRGSDIELKADVEVVNPDAYIASLSEGGHLDMTLTVERGQGYVPAEQNKSDADPIGVIAVDSLFSPVEKVQYRVSETRAGARVDLDALTLEVFTDGRLGPREALREASRKLIDFFGLFAEGYQGAGAAEEPGRSGGRPVITDERPIEDLELTVRSYNCLKREGVDTIGQLATMTEEELMNIRNLGMKSVDEIRSKLEEYGYTLESGRE</sequence>
<comment type="function">
    <text evidence="1">DNA-dependent RNA polymerase catalyzes the transcription of DNA into RNA using the four ribonucleoside triphosphates as substrates.</text>
</comment>
<comment type="catalytic activity">
    <reaction evidence="1">
        <text>RNA(n) + a ribonucleoside 5'-triphosphate = RNA(n+1) + diphosphate</text>
        <dbReference type="Rhea" id="RHEA:21248"/>
        <dbReference type="Rhea" id="RHEA-COMP:14527"/>
        <dbReference type="Rhea" id="RHEA-COMP:17342"/>
        <dbReference type="ChEBI" id="CHEBI:33019"/>
        <dbReference type="ChEBI" id="CHEBI:61557"/>
        <dbReference type="ChEBI" id="CHEBI:140395"/>
        <dbReference type="EC" id="2.7.7.6"/>
    </reaction>
</comment>
<comment type="subunit">
    <text evidence="1">Homodimer. The RNAP catalytic core consists of 2 alpha, 1 beta, 1 beta' and 1 omega subunit. When a sigma factor is associated with the core the holoenzyme is formed, which can initiate transcription.</text>
</comment>
<comment type="domain">
    <text evidence="1">The N-terminal domain is essential for RNAP assembly and basal transcription, whereas the C-terminal domain is involved in interaction with transcriptional regulators and with upstream promoter elements.</text>
</comment>
<comment type="similarity">
    <text evidence="1">Belongs to the RNA polymerase alpha chain family.</text>
</comment>
<organism>
    <name type="scientific">Rubrobacter xylanophilus (strain DSM 9941 / JCM 11954 / NBRC 16129 / PRD-1)</name>
    <dbReference type="NCBI Taxonomy" id="266117"/>
    <lineage>
        <taxon>Bacteria</taxon>
        <taxon>Bacillati</taxon>
        <taxon>Actinomycetota</taxon>
        <taxon>Rubrobacteria</taxon>
        <taxon>Rubrobacterales</taxon>
        <taxon>Rubrobacteraceae</taxon>
        <taxon>Rubrobacter</taxon>
    </lineage>
</organism>
<dbReference type="EC" id="2.7.7.6" evidence="1"/>
<dbReference type="EMBL" id="CP000386">
    <property type="protein sequence ID" value="ABG05072.1"/>
    <property type="molecule type" value="Genomic_DNA"/>
</dbReference>
<dbReference type="SMR" id="Q1AU56"/>
<dbReference type="STRING" id="266117.Rxyl_2128"/>
<dbReference type="KEGG" id="rxy:Rxyl_2128"/>
<dbReference type="eggNOG" id="COG0202">
    <property type="taxonomic scope" value="Bacteria"/>
</dbReference>
<dbReference type="HOGENOM" id="CLU_053084_0_1_11"/>
<dbReference type="OrthoDB" id="9805706at2"/>
<dbReference type="PhylomeDB" id="Q1AU56"/>
<dbReference type="Proteomes" id="UP000006637">
    <property type="component" value="Chromosome"/>
</dbReference>
<dbReference type="GO" id="GO:0005737">
    <property type="term" value="C:cytoplasm"/>
    <property type="evidence" value="ECO:0007669"/>
    <property type="project" value="UniProtKB-ARBA"/>
</dbReference>
<dbReference type="GO" id="GO:0000428">
    <property type="term" value="C:DNA-directed RNA polymerase complex"/>
    <property type="evidence" value="ECO:0007669"/>
    <property type="project" value="UniProtKB-KW"/>
</dbReference>
<dbReference type="GO" id="GO:0003677">
    <property type="term" value="F:DNA binding"/>
    <property type="evidence" value="ECO:0007669"/>
    <property type="project" value="UniProtKB-UniRule"/>
</dbReference>
<dbReference type="GO" id="GO:0003899">
    <property type="term" value="F:DNA-directed RNA polymerase activity"/>
    <property type="evidence" value="ECO:0007669"/>
    <property type="project" value="UniProtKB-UniRule"/>
</dbReference>
<dbReference type="GO" id="GO:0046983">
    <property type="term" value="F:protein dimerization activity"/>
    <property type="evidence" value="ECO:0007669"/>
    <property type="project" value="InterPro"/>
</dbReference>
<dbReference type="GO" id="GO:0006351">
    <property type="term" value="P:DNA-templated transcription"/>
    <property type="evidence" value="ECO:0007669"/>
    <property type="project" value="UniProtKB-UniRule"/>
</dbReference>
<dbReference type="CDD" id="cd06928">
    <property type="entry name" value="RNAP_alpha_NTD"/>
    <property type="match status" value="1"/>
</dbReference>
<dbReference type="FunFam" id="2.170.120.12:FF:000001">
    <property type="entry name" value="DNA-directed RNA polymerase subunit alpha"/>
    <property type="match status" value="1"/>
</dbReference>
<dbReference type="Gene3D" id="1.10.150.20">
    <property type="entry name" value="5' to 3' exonuclease, C-terminal subdomain"/>
    <property type="match status" value="1"/>
</dbReference>
<dbReference type="Gene3D" id="2.170.120.12">
    <property type="entry name" value="DNA-directed RNA polymerase, insert domain"/>
    <property type="match status" value="1"/>
</dbReference>
<dbReference type="Gene3D" id="3.30.1360.10">
    <property type="entry name" value="RNA polymerase, RBP11-like subunit"/>
    <property type="match status" value="1"/>
</dbReference>
<dbReference type="HAMAP" id="MF_00059">
    <property type="entry name" value="RNApol_bact_RpoA"/>
    <property type="match status" value="1"/>
</dbReference>
<dbReference type="InterPro" id="IPR011262">
    <property type="entry name" value="DNA-dir_RNA_pol_insert"/>
</dbReference>
<dbReference type="InterPro" id="IPR011263">
    <property type="entry name" value="DNA-dir_RNA_pol_RpoA/D/Rpb3"/>
</dbReference>
<dbReference type="InterPro" id="IPR011773">
    <property type="entry name" value="DNA-dir_RpoA"/>
</dbReference>
<dbReference type="InterPro" id="IPR036603">
    <property type="entry name" value="RBP11-like"/>
</dbReference>
<dbReference type="InterPro" id="IPR011260">
    <property type="entry name" value="RNAP_asu_C"/>
</dbReference>
<dbReference type="InterPro" id="IPR036643">
    <property type="entry name" value="RNApol_insert_sf"/>
</dbReference>
<dbReference type="NCBIfam" id="NF003513">
    <property type="entry name" value="PRK05182.1-2"/>
    <property type="match status" value="1"/>
</dbReference>
<dbReference type="NCBIfam" id="NF003519">
    <property type="entry name" value="PRK05182.2-5"/>
    <property type="match status" value="1"/>
</dbReference>
<dbReference type="NCBIfam" id="TIGR02027">
    <property type="entry name" value="rpoA"/>
    <property type="match status" value="1"/>
</dbReference>
<dbReference type="Pfam" id="PF01000">
    <property type="entry name" value="RNA_pol_A_bac"/>
    <property type="match status" value="1"/>
</dbReference>
<dbReference type="Pfam" id="PF03118">
    <property type="entry name" value="RNA_pol_A_CTD"/>
    <property type="match status" value="1"/>
</dbReference>
<dbReference type="Pfam" id="PF01193">
    <property type="entry name" value="RNA_pol_L"/>
    <property type="match status" value="1"/>
</dbReference>
<dbReference type="SMART" id="SM00662">
    <property type="entry name" value="RPOLD"/>
    <property type="match status" value="1"/>
</dbReference>
<dbReference type="SUPFAM" id="SSF47789">
    <property type="entry name" value="C-terminal domain of RNA polymerase alpha subunit"/>
    <property type="match status" value="1"/>
</dbReference>
<dbReference type="SUPFAM" id="SSF56553">
    <property type="entry name" value="Insert subdomain of RNA polymerase alpha subunit"/>
    <property type="match status" value="1"/>
</dbReference>
<dbReference type="SUPFAM" id="SSF55257">
    <property type="entry name" value="RBP11-like subunits of RNA polymerase"/>
    <property type="match status" value="1"/>
</dbReference>
<feature type="chain" id="PRO_0000264540" description="DNA-directed RNA polymerase subunit alpha">
    <location>
        <begin position="1"/>
        <end position="313"/>
    </location>
</feature>
<feature type="region of interest" description="Alpha N-terminal domain (alpha-NTD)" evidence="1">
    <location>
        <begin position="1"/>
        <end position="227"/>
    </location>
</feature>
<feature type="region of interest" description="Alpha C-terminal domain (alpha-CTD)" evidence="1">
    <location>
        <begin position="242"/>
        <end position="313"/>
    </location>
</feature>
<evidence type="ECO:0000255" key="1">
    <source>
        <dbReference type="HAMAP-Rule" id="MF_00059"/>
    </source>
</evidence>
<reference key="1">
    <citation type="submission" date="2006-06" db="EMBL/GenBank/DDBJ databases">
        <title>Complete sequence of Rubrobacter xylanophilus DSM 9941.</title>
        <authorList>
            <consortium name="US DOE Joint Genome Institute"/>
            <person name="Copeland A."/>
            <person name="Lucas S."/>
            <person name="Lapidus A."/>
            <person name="Barry K."/>
            <person name="Detter J.C."/>
            <person name="Glavina del Rio T."/>
            <person name="Hammon N."/>
            <person name="Israni S."/>
            <person name="Dalin E."/>
            <person name="Tice H."/>
            <person name="Pitluck S."/>
            <person name="Munk A.C."/>
            <person name="Brettin T."/>
            <person name="Bruce D."/>
            <person name="Han C."/>
            <person name="Tapia R."/>
            <person name="Gilna P."/>
            <person name="Schmutz J."/>
            <person name="Larimer F."/>
            <person name="Land M."/>
            <person name="Hauser L."/>
            <person name="Kyrpides N."/>
            <person name="Lykidis A."/>
            <person name="da Costa M.S."/>
            <person name="Rainey F.A."/>
            <person name="Empadinhas N."/>
            <person name="Jolivet E."/>
            <person name="Battista J.R."/>
            <person name="Richardson P."/>
        </authorList>
    </citation>
    <scope>NUCLEOTIDE SEQUENCE [LARGE SCALE GENOMIC DNA]</scope>
    <source>
        <strain>DSM 9941 / JCM 11954 / NBRC 16129 / PRD-1</strain>
    </source>
</reference>
<protein>
    <recommendedName>
        <fullName evidence="1">DNA-directed RNA polymerase subunit alpha</fullName>
        <shortName evidence="1">RNAP subunit alpha</shortName>
        <ecNumber evidence="1">2.7.7.6</ecNumber>
    </recommendedName>
    <alternativeName>
        <fullName evidence="1">RNA polymerase subunit alpha</fullName>
    </alternativeName>
    <alternativeName>
        <fullName evidence="1">Transcriptase subunit alpha</fullName>
    </alternativeName>
</protein>
<gene>
    <name evidence="1" type="primary">rpoA</name>
    <name type="ordered locus">Rxyl_2128</name>
</gene>
<keyword id="KW-0240">DNA-directed RNA polymerase</keyword>
<keyword id="KW-0548">Nucleotidyltransferase</keyword>
<keyword id="KW-1185">Reference proteome</keyword>
<keyword id="KW-0804">Transcription</keyword>
<keyword id="KW-0808">Transferase</keyword>
<accession>Q1AU56</accession>